<protein>
    <recommendedName>
        <fullName evidence="1">Cysteine--tRNA ligase</fullName>
        <ecNumber evidence="1">6.1.1.16</ecNumber>
    </recommendedName>
    <alternativeName>
        <fullName evidence="1">Cysteinyl-tRNA synthetase</fullName>
        <shortName evidence="1">CysRS</shortName>
    </alternativeName>
</protein>
<accession>Q8A2F4</accession>
<keyword id="KW-0030">Aminoacyl-tRNA synthetase</keyword>
<keyword id="KW-0067">ATP-binding</keyword>
<keyword id="KW-0963">Cytoplasm</keyword>
<keyword id="KW-0436">Ligase</keyword>
<keyword id="KW-0479">Metal-binding</keyword>
<keyword id="KW-0547">Nucleotide-binding</keyword>
<keyword id="KW-0648">Protein biosynthesis</keyword>
<keyword id="KW-1185">Reference proteome</keyword>
<keyword id="KW-0862">Zinc</keyword>
<proteinExistence type="inferred from homology"/>
<name>SYC_BACTN</name>
<reference key="1">
    <citation type="journal article" date="2003" name="Science">
        <title>A genomic view of the human-Bacteroides thetaiotaomicron symbiosis.</title>
        <authorList>
            <person name="Xu J."/>
            <person name="Bjursell M.K."/>
            <person name="Himrod J."/>
            <person name="Deng S."/>
            <person name="Carmichael L.K."/>
            <person name="Chiang H.C."/>
            <person name="Hooper L.V."/>
            <person name="Gordon J.I."/>
        </authorList>
    </citation>
    <scope>NUCLEOTIDE SEQUENCE [LARGE SCALE GENOMIC DNA]</scope>
    <source>
        <strain>ATCC 29148 / DSM 2079 / JCM 5827 / CCUG 10774 / NCTC 10582 / VPI-5482 / E50</strain>
    </source>
</reference>
<gene>
    <name evidence="1" type="primary">cysS</name>
    <name type="ordered locus">BT_3351</name>
</gene>
<sequence length="493" mass="55996">MEHQLTIYNTLDRKKELFVPLHAPHVGMYVCGPTVYGDAHLGHARPAITFDVLFRYLTHLGYKVRYVRNITDVGHLEHDADEGEDKIAKKARLEELEPMEVVQYYLNRYHKAMEALNVLSPSIEPHASGHIIEQIQLVQKILDAGYAYESEGSVYFDVAKYNKDYHYGKLSGRNLDDVLNTTRDLDGQSEKRNPADFALWKKAQPEHIMRWPSPWSDGFPGWHAECTAMGRKYLGEHFDIHGGGMDLIFPHHECEIAQSVASQGDDMVHYWMHNNMITINGTKMGKSLGNFITLDEFFNGTHKLLAQAYTPMTIRFFILQAHYRSTVDFSNEALQASEKGLQRLIEAIEGLDKITPAATTSEGINVKELRAKCYEAMNDDLNTPIVIAQLFEGARIINNINAGNATISAEDLKDLKETFHLFCFDIMGLKEEKGSSDGREAAYGKVVDMLLEQRMKAKANKDWATSDEIRNTLTALGFEVKDTKDGFEWRLNK</sequence>
<feature type="chain" id="PRO_0000159353" description="Cysteine--tRNA ligase">
    <location>
        <begin position="1"/>
        <end position="493"/>
    </location>
</feature>
<feature type="short sequence motif" description="'HIGH' region">
    <location>
        <begin position="33"/>
        <end position="43"/>
    </location>
</feature>
<feature type="short sequence motif" description="'KMSKS' region">
    <location>
        <begin position="283"/>
        <end position="287"/>
    </location>
</feature>
<feature type="binding site" evidence="1">
    <location>
        <position position="31"/>
    </location>
    <ligand>
        <name>Zn(2+)</name>
        <dbReference type="ChEBI" id="CHEBI:29105"/>
    </ligand>
</feature>
<feature type="binding site" evidence="1">
    <location>
        <position position="226"/>
    </location>
    <ligand>
        <name>Zn(2+)</name>
        <dbReference type="ChEBI" id="CHEBI:29105"/>
    </ligand>
</feature>
<feature type="binding site" evidence="1">
    <location>
        <position position="251"/>
    </location>
    <ligand>
        <name>Zn(2+)</name>
        <dbReference type="ChEBI" id="CHEBI:29105"/>
    </ligand>
</feature>
<feature type="binding site" evidence="1">
    <location>
        <position position="255"/>
    </location>
    <ligand>
        <name>Zn(2+)</name>
        <dbReference type="ChEBI" id="CHEBI:29105"/>
    </ligand>
</feature>
<feature type="binding site" evidence="1">
    <location>
        <position position="286"/>
    </location>
    <ligand>
        <name>ATP</name>
        <dbReference type="ChEBI" id="CHEBI:30616"/>
    </ligand>
</feature>
<organism>
    <name type="scientific">Bacteroides thetaiotaomicron (strain ATCC 29148 / DSM 2079 / JCM 5827 / CCUG 10774 / NCTC 10582 / VPI-5482 / E50)</name>
    <dbReference type="NCBI Taxonomy" id="226186"/>
    <lineage>
        <taxon>Bacteria</taxon>
        <taxon>Pseudomonadati</taxon>
        <taxon>Bacteroidota</taxon>
        <taxon>Bacteroidia</taxon>
        <taxon>Bacteroidales</taxon>
        <taxon>Bacteroidaceae</taxon>
        <taxon>Bacteroides</taxon>
    </lineage>
</organism>
<evidence type="ECO:0000255" key="1">
    <source>
        <dbReference type="HAMAP-Rule" id="MF_00041"/>
    </source>
</evidence>
<dbReference type="EC" id="6.1.1.16" evidence="1"/>
<dbReference type="EMBL" id="AE015928">
    <property type="protein sequence ID" value="AAO78457.1"/>
    <property type="molecule type" value="Genomic_DNA"/>
</dbReference>
<dbReference type="RefSeq" id="NP_812263.1">
    <property type="nucleotide sequence ID" value="NC_004663.1"/>
</dbReference>
<dbReference type="RefSeq" id="WP_008762954.1">
    <property type="nucleotide sequence ID" value="NZ_UYXG01000003.1"/>
</dbReference>
<dbReference type="SMR" id="Q8A2F4"/>
<dbReference type="FunCoup" id="Q8A2F4">
    <property type="interactions" value="500"/>
</dbReference>
<dbReference type="STRING" id="226186.BT_3351"/>
<dbReference type="PaxDb" id="226186-BT_3351"/>
<dbReference type="EnsemblBacteria" id="AAO78457">
    <property type="protein sequence ID" value="AAO78457"/>
    <property type="gene ID" value="BT_3351"/>
</dbReference>
<dbReference type="GeneID" id="60924530"/>
<dbReference type="KEGG" id="bth:BT_3351"/>
<dbReference type="PATRIC" id="fig|226186.12.peg.3419"/>
<dbReference type="eggNOG" id="COG0215">
    <property type="taxonomic scope" value="Bacteria"/>
</dbReference>
<dbReference type="HOGENOM" id="CLU_013528_0_1_10"/>
<dbReference type="InParanoid" id="Q8A2F4"/>
<dbReference type="OrthoDB" id="9815130at2"/>
<dbReference type="Proteomes" id="UP000001414">
    <property type="component" value="Chromosome"/>
</dbReference>
<dbReference type="GO" id="GO:0005737">
    <property type="term" value="C:cytoplasm"/>
    <property type="evidence" value="ECO:0000318"/>
    <property type="project" value="GO_Central"/>
</dbReference>
<dbReference type="GO" id="GO:0005829">
    <property type="term" value="C:cytosol"/>
    <property type="evidence" value="ECO:0000318"/>
    <property type="project" value="GO_Central"/>
</dbReference>
<dbReference type="GO" id="GO:0005524">
    <property type="term" value="F:ATP binding"/>
    <property type="evidence" value="ECO:0000318"/>
    <property type="project" value="GO_Central"/>
</dbReference>
<dbReference type="GO" id="GO:0004817">
    <property type="term" value="F:cysteine-tRNA ligase activity"/>
    <property type="evidence" value="ECO:0000318"/>
    <property type="project" value="GO_Central"/>
</dbReference>
<dbReference type="GO" id="GO:0008270">
    <property type="term" value="F:zinc ion binding"/>
    <property type="evidence" value="ECO:0007669"/>
    <property type="project" value="UniProtKB-UniRule"/>
</dbReference>
<dbReference type="GO" id="GO:0006423">
    <property type="term" value="P:cysteinyl-tRNA aminoacylation"/>
    <property type="evidence" value="ECO:0000318"/>
    <property type="project" value="GO_Central"/>
</dbReference>
<dbReference type="CDD" id="cd00672">
    <property type="entry name" value="CysRS_core"/>
    <property type="match status" value="1"/>
</dbReference>
<dbReference type="FunFam" id="1.20.120.1910:FF:000007">
    <property type="entry name" value="Cysteine--tRNA ligase"/>
    <property type="match status" value="1"/>
</dbReference>
<dbReference type="FunFam" id="3.40.50.620:FF:000140">
    <property type="entry name" value="Cysteine--tRNA ligase"/>
    <property type="match status" value="1"/>
</dbReference>
<dbReference type="Gene3D" id="1.20.120.1910">
    <property type="entry name" value="Cysteine-tRNA ligase, C-terminal anti-codon recognition domain"/>
    <property type="match status" value="1"/>
</dbReference>
<dbReference type="Gene3D" id="3.40.50.620">
    <property type="entry name" value="HUPs"/>
    <property type="match status" value="1"/>
</dbReference>
<dbReference type="HAMAP" id="MF_00041">
    <property type="entry name" value="Cys_tRNA_synth"/>
    <property type="match status" value="1"/>
</dbReference>
<dbReference type="InterPro" id="IPR015803">
    <property type="entry name" value="Cys-tRNA-ligase"/>
</dbReference>
<dbReference type="InterPro" id="IPR015273">
    <property type="entry name" value="Cys-tRNA-synt_Ia_DALR"/>
</dbReference>
<dbReference type="InterPro" id="IPR024909">
    <property type="entry name" value="Cys-tRNA/MSH_ligase"/>
</dbReference>
<dbReference type="InterPro" id="IPR056411">
    <property type="entry name" value="CysS_C"/>
</dbReference>
<dbReference type="InterPro" id="IPR014729">
    <property type="entry name" value="Rossmann-like_a/b/a_fold"/>
</dbReference>
<dbReference type="InterPro" id="IPR032678">
    <property type="entry name" value="tRNA-synt_1_cat_dom"/>
</dbReference>
<dbReference type="InterPro" id="IPR009080">
    <property type="entry name" value="tRNAsynth_Ia_anticodon-bd"/>
</dbReference>
<dbReference type="NCBIfam" id="TIGR00435">
    <property type="entry name" value="cysS"/>
    <property type="match status" value="1"/>
</dbReference>
<dbReference type="PANTHER" id="PTHR10890:SF3">
    <property type="entry name" value="CYSTEINE--TRNA LIGASE, CYTOPLASMIC"/>
    <property type="match status" value="1"/>
</dbReference>
<dbReference type="PANTHER" id="PTHR10890">
    <property type="entry name" value="CYSTEINYL-TRNA SYNTHETASE"/>
    <property type="match status" value="1"/>
</dbReference>
<dbReference type="Pfam" id="PF23493">
    <property type="entry name" value="CysS_C"/>
    <property type="match status" value="1"/>
</dbReference>
<dbReference type="Pfam" id="PF09190">
    <property type="entry name" value="DALR_2"/>
    <property type="match status" value="1"/>
</dbReference>
<dbReference type="Pfam" id="PF01406">
    <property type="entry name" value="tRNA-synt_1e"/>
    <property type="match status" value="1"/>
</dbReference>
<dbReference type="PRINTS" id="PR00983">
    <property type="entry name" value="TRNASYNTHCYS"/>
</dbReference>
<dbReference type="SMART" id="SM00840">
    <property type="entry name" value="DALR_2"/>
    <property type="match status" value="1"/>
</dbReference>
<dbReference type="SUPFAM" id="SSF47323">
    <property type="entry name" value="Anticodon-binding domain of a subclass of class I aminoacyl-tRNA synthetases"/>
    <property type="match status" value="1"/>
</dbReference>
<dbReference type="SUPFAM" id="SSF52374">
    <property type="entry name" value="Nucleotidylyl transferase"/>
    <property type="match status" value="1"/>
</dbReference>
<comment type="catalytic activity">
    <reaction evidence="1">
        <text>tRNA(Cys) + L-cysteine + ATP = L-cysteinyl-tRNA(Cys) + AMP + diphosphate</text>
        <dbReference type="Rhea" id="RHEA:17773"/>
        <dbReference type="Rhea" id="RHEA-COMP:9661"/>
        <dbReference type="Rhea" id="RHEA-COMP:9679"/>
        <dbReference type="ChEBI" id="CHEBI:30616"/>
        <dbReference type="ChEBI" id="CHEBI:33019"/>
        <dbReference type="ChEBI" id="CHEBI:35235"/>
        <dbReference type="ChEBI" id="CHEBI:78442"/>
        <dbReference type="ChEBI" id="CHEBI:78517"/>
        <dbReference type="ChEBI" id="CHEBI:456215"/>
        <dbReference type="EC" id="6.1.1.16"/>
    </reaction>
</comment>
<comment type="cofactor">
    <cofactor evidence="1">
        <name>Zn(2+)</name>
        <dbReference type="ChEBI" id="CHEBI:29105"/>
    </cofactor>
    <text evidence="1">Binds 1 zinc ion per subunit.</text>
</comment>
<comment type="subunit">
    <text evidence="1">Monomer.</text>
</comment>
<comment type="subcellular location">
    <subcellularLocation>
        <location evidence="1">Cytoplasm</location>
    </subcellularLocation>
</comment>
<comment type="similarity">
    <text evidence="1">Belongs to the class-I aminoacyl-tRNA synthetase family.</text>
</comment>